<protein>
    <recommendedName>
        <fullName evidence="1">Uracil-DNA glycosylase</fullName>
        <shortName evidence="1">UDG</shortName>
        <ecNumber evidence="1">3.2.2.27</ecNumber>
    </recommendedName>
</protein>
<evidence type="ECO:0000255" key="1">
    <source>
        <dbReference type="HAMAP-Rule" id="MF_00148"/>
    </source>
</evidence>
<comment type="function">
    <text evidence="1">Excises uracil residues from the DNA which can arise as a result of misincorporation of dUMP residues by DNA polymerase or due to deamination of cytosine.</text>
</comment>
<comment type="catalytic activity">
    <reaction evidence="1">
        <text>Hydrolyzes single-stranded DNA or mismatched double-stranded DNA and polynucleotides, releasing free uracil.</text>
        <dbReference type="EC" id="3.2.2.27"/>
    </reaction>
</comment>
<comment type="subcellular location">
    <subcellularLocation>
        <location evidence="1">Cytoplasm</location>
    </subcellularLocation>
</comment>
<comment type="similarity">
    <text evidence="1">Belongs to the uracil-DNA glycosylase (UDG) superfamily. UNG family.</text>
</comment>
<organism>
    <name type="scientific">Streptococcus pneumoniae serotype 19F (strain G54)</name>
    <dbReference type="NCBI Taxonomy" id="512566"/>
    <lineage>
        <taxon>Bacteria</taxon>
        <taxon>Bacillati</taxon>
        <taxon>Bacillota</taxon>
        <taxon>Bacilli</taxon>
        <taxon>Lactobacillales</taxon>
        <taxon>Streptococcaceae</taxon>
        <taxon>Streptococcus</taxon>
    </lineage>
</organism>
<accession>B5E4R3</accession>
<dbReference type="EC" id="3.2.2.27" evidence="1"/>
<dbReference type="EMBL" id="CP001015">
    <property type="protein sequence ID" value="ACF55476.1"/>
    <property type="molecule type" value="Genomic_DNA"/>
</dbReference>
<dbReference type="SMR" id="B5E4R3"/>
<dbReference type="KEGG" id="spx:SPG_1069"/>
<dbReference type="HOGENOM" id="CLU_032162_3_1_9"/>
<dbReference type="GO" id="GO:0005737">
    <property type="term" value="C:cytoplasm"/>
    <property type="evidence" value="ECO:0007669"/>
    <property type="project" value="UniProtKB-SubCell"/>
</dbReference>
<dbReference type="GO" id="GO:0004844">
    <property type="term" value="F:uracil DNA N-glycosylase activity"/>
    <property type="evidence" value="ECO:0007669"/>
    <property type="project" value="UniProtKB-UniRule"/>
</dbReference>
<dbReference type="GO" id="GO:0097510">
    <property type="term" value="P:base-excision repair, AP site formation via deaminated base removal"/>
    <property type="evidence" value="ECO:0007669"/>
    <property type="project" value="TreeGrafter"/>
</dbReference>
<dbReference type="CDD" id="cd10027">
    <property type="entry name" value="UDG-F1-like"/>
    <property type="match status" value="1"/>
</dbReference>
<dbReference type="FunFam" id="3.40.470.10:FF:000008">
    <property type="entry name" value="Uracil-DNA glycosylase"/>
    <property type="match status" value="1"/>
</dbReference>
<dbReference type="Gene3D" id="3.40.470.10">
    <property type="entry name" value="Uracil-DNA glycosylase-like domain"/>
    <property type="match status" value="1"/>
</dbReference>
<dbReference type="HAMAP" id="MF_00148">
    <property type="entry name" value="UDG"/>
    <property type="match status" value="1"/>
</dbReference>
<dbReference type="InterPro" id="IPR002043">
    <property type="entry name" value="UDG_fam1"/>
</dbReference>
<dbReference type="InterPro" id="IPR018085">
    <property type="entry name" value="Ura-DNA_Glyclase_AS"/>
</dbReference>
<dbReference type="InterPro" id="IPR005122">
    <property type="entry name" value="Uracil-DNA_glycosylase-like"/>
</dbReference>
<dbReference type="InterPro" id="IPR036895">
    <property type="entry name" value="Uracil-DNA_glycosylase-like_sf"/>
</dbReference>
<dbReference type="NCBIfam" id="NF003588">
    <property type="entry name" value="PRK05254.1-1"/>
    <property type="match status" value="1"/>
</dbReference>
<dbReference type="NCBIfam" id="NF003589">
    <property type="entry name" value="PRK05254.1-2"/>
    <property type="match status" value="1"/>
</dbReference>
<dbReference type="NCBIfam" id="NF003591">
    <property type="entry name" value="PRK05254.1-4"/>
    <property type="match status" value="1"/>
</dbReference>
<dbReference type="NCBIfam" id="NF003592">
    <property type="entry name" value="PRK05254.1-5"/>
    <property type="match status" value="1"/>
</dbReference>
<dbReference type="NCBIfam" id="TIGR00628">
    <property type="entry name" value="ung"/>
    <property type="match status" value="1"/>
</dbReference>
<dbReference type="PANTHER" id="PTHR11264">
    <property type="entry name" value="URACIL-DNA GLYCOSYLASE"/>
    <property type="match status" value="1"/>
</dbReference>
<dbReference type="PANTHER" id="PTHR11264:SF0">
    <property type="entry name" value="URACIL-DNA GLYCOSYLASE"/>
    <property type="match status" value="1"/>
</dbReference>
<dbReference type="Pfam" id="PF03167">
    <property type="entry name" value="UDG"/>
    <property type="match status" value="1"/>
</dbReference>
<dbReference type="SMART" id="SM00986">
    <property type="entry name" value="UDG"/>
    <property type="match status" value="1"/>
</dbReference>
<dbReference type="SMART" id="SM00987">
    <property type="entry name" value="UreE_C"/>
    <property type="match status" value="1"/>
</dbReference>
<dbReference type="SUPFAM" id="SSF52141">
    <property type="entry name" value="Uracil-DNA glycosylase-like"/>
    <property type="match status" value="1"/>
</dbReference>
<dbReference type="PROSITE" id="PS00130">
    <property type="entry name" value="U_DNA_GLYCOSYLASE"/>
    <property type="match status" value="1"/>
</dbReference>
<gene>
    <name evidence="1" type="primary">ung</name>
    <name type="ordered locus">SPG_1069</name>
</gene>
<proteinExistence type="inferred from homology"/>
<keyword id="KW-0963">Cytoplasm</keyword>
<keyword id="KW-0227">DNA damage</keyword>
<keyword id="KW-0234">DNA repair</keyword>
<keyword id="KW-0378">Hydrolase</keyword>
<feature type="chain" id="PRO_1000096611" description="Uracil-DNA glycosylase">
    <location>
        <begin position="1"/>
        <end position="217"/>
    </location>
</feature>
<feature type="active site" description="Proton acceptor" evidence="1">
    <location>
        <position position="62"/>
    </location>
</feature>
<name>UNG_STRP4</name>
<sequence length="217" mass="24080">MEHSSWHALIKAQLPEGYFGKINQFMEQVYSQGIIYPPKEKVFQALLTTLLEEVKVVILGQDPYHGPGQAQGLSFSVPDSIPAPPSLQNILKELSDDIGVKKSHDLTAWAEQGVLLLNACLTVPAGQANGHAGQIWEPFTDAVIQVVNHLDRPVVFVLWGAYARKKKALVTNPHHLIIESAHPSPLSVYRGFWGSKPFSKANTFLKETGQEPIDWLR</sequence>
<reference key="1">
    <citation type="journal article" date="2001" name="Microb. Drug Resist.">
        <title>Annotated draft genomic sequence from a Streptococcus pneumoniae type 19F clinical isolate.</title>
        <authorList>
            <person name="Dopazo J."/>
            <person name="Mendoza A."/>
            <person name="Herrero J."/>
            <person name="Caldara F."/>
            <person name="Humbert Y."/>
            <person name="Friedli L."/>
            <person name="Guerrier M."/>
            <person name="Grand-Schenk E."/>
            <person name="Gandin C."/>
            <person name="de Francesco M."/>
            <person name="Polissi A."/>
            <person name="Buell G."/>
            <person name="Feger G."/>
            <person name="Garcia E."/>
            <person name="Peitsch M."/>
            <person name="Garcia-Bustos J.F."/>
        </authorList>
    </citation>
    <scope>NUCLEOTIDE SEQUENCE [LARGE SCALE GENOMIC DNA]</scope>
    <source>
        <strain>G54</strain>
    </source>
</reference>
<reference key="2">
    <citation type="submission" date="2008-03" db="EMBL/GenBank/DDBJ databases">
        <title>Pneumococcal beta glucoside metabolism investigated by whole genome comparison.</title>
        <authorList>
            <person name="Mulas L."/>
            <person name="Trappetti C."/>
            <person name="Hakenbeck R."/>
            <person name="Iannelli F."/>
            <person name="Pozzi G."/>
            <person name="Davidsen T.M."/>
            <person name="Tettelin H."/>
            <person name="Oggioni M."/>
        </authorList>
    </citation>
    <scope>NUCLEOTIDE SEQUENCE [LARGE SCALE GENOMIC DNA]</scope>
    <source>
        <strain>G54</strain>
    </source>
</reference>